<comment type="function">
    <text evidence="1">Together with the chaperonin GroEL, plays an essential role in assisting protein folding. The GroEL-GroES system forms a nano-cage that allows encapsulation of the non-native substrate proteins and provides a physical environment optimized to promote and accelerate protein folding. GroES binds to the apical surface of the GroEL ring, thereby capping the opening of the GroEL channel.</text>
</comment>
<comment type="subunit">
    <text evidence="1">Heptamer of 7 subunits arranged in a ring. Interacts with the chaperonin GroEL.</text>
</comment>
<comment type="subcellular location">
    <subcellularLocation>
        <location evidence="1">Cytoplasm</location>
    </subcellularLocation>
</comment>
<comment type="similarity">
    <text evidence="1">Belongs to the GroES chaperonin family.</text>
</comment>
<feature type="chain" id="PRO_1000072585" description="Co-chaperonin GroES">
    <location>
        <begin position="1"/>
        <end position="94"/>
    </location>
</feature>
<organism>
    <name type="scientific">Lactobacillus helveticus (strain DPC 4571)</name>
    <dbReference type="NCBI Taxonomy" id="405566"/>
    <lineage>
        <taxon>Bacteria</taxon>
        <taxon>Bacillati</taxon>
        <taxon>Bacillota</taxon>
        <taxon>Bacilli</taxon>
        <taxon>Lactobacillales</taxon>
        <taxon>Lactobacillaceae</taxon>
        <taxon>Lactobacillus</taxon>
    </lineage>
</organism>
<proteinExistence type="inferred from homology"/>
<keyword id="KW-0143">Chaperone</keyword>
<keyword id="KW-0963">Cytoplasm</keyword>
<dbReference type="EMBL" id="CP000517">
    <property type="protein sequence ID" value="ABX26633.1"/>
    <property type="molecule type" value="Genomic_DNA"/>
</dbReference>
<dbReference type="RefSeq" id="WP_003627770.1">
    <property type="nucleotide sequence ID" value="NC_010080.1"/>
</dbReference>
<dbReference type="SMR" id="A8YTH7"/>
<dbReference type="GeneID" id="83726427"/>
<dbReference type="KEGG" id="lhe:lhv_0425"/>
<dbReference type="eggNOG" id="COG0234">
    <property type="taxonomic scope" value="Bacteria"/>
</dbReference>
<dbReference type="HOGENOM" id="CLU_132825_2_1_9"/>
<dbReference type="Proteomes" id="UP000000790">
    <property type="component" value="Chromosome"/>
</dbReference>
<dbReference type="GO" id="GO:0005737">
    <property type="term" value="C:cytoplasm"/>
    <property type="evidence" value="ECO:0007669"/>
    <property type="project" value="UniProtKB-SubCell"/>
</dbReference>
<dbReference type="GO" id="GO:0005524">
    <property type="term" value="F:ATP binding"/>
    <property type="evidence" value="ECO:0007669"/>
    <property type="project" value="InterPro"/>
</dbReference>
<dbReference type="GO" id="GO:0046872">
    <property type="term" value="F:metal ion binding"/>
    <property type="evidence" value="ECO:0007669"/>
    <property type="project" value="TreeGrafter"/>
</dbReference>
<dbReference type="GO" id="GO:0044183">
    <property type="term" value="F:protein folding chaperone"/>
    <property type="evidence" value="ECO:0007669"/>
    <property type="project" value="InterPro"/>
</dbReference>
<dbReference type="GO" id="GO:0051087">
    <property type="term" value="F:protein-folding chaperone binding"/>
    <property type="evidence" value="ECO:0007669"/>
    <property type="project" value="TreeGrafter"/>
</dbReference>
<dbReference type="GO" id="GO:0051082">
    <property type="term" value="F:unfolded protein binding"/>
    <property type="evidence" value="ECO:0007669"/>
    <property type="project" value="TreeGrafter"/>
</dbReference>
<dbReference type="GO" id="GO:0051085">
    <property type="term" value="P:chaperone cofactor-dependent protein refolding"/>
    <property type="evidence" value="ECO:0007669"/>
    <property type="project" value="TreeGrafter"/>
</dbReference>
<dbReference type="CDD" id="cd00320">
    <property type="entry name" value="cpn10"/>
    <property type="match status" value="1"/>
</dbReference>
<dbReference type="FunFam" id="2.30.33.40:FF:000001">
    <property type="entry name" value="10 kDa chaperonin"/>
    <property type="match status" value="1"/>
</dbReference>
<dbReference type="Gene3D" id="2.30.33.40">
    <property type="entry name" value="GroES chaperonin"/>
    <property type="match status" value="1"/>
</dbReference>
<dbReference type="HAMAP" id="MF_00580">
    <property type="entry name" value="CH10"/>
    <property type="match status" value="1"/>
</dbReference>
<dbReference type="InterPro" id="IPR020818">
    <property type="entry name" value="Chaperonin_GroES"/>
</dbReference>
<dbReference type="InterPro" id="IPR037124">
    <property type="entry name" value="Chaperonin_GroES_sf"/>
</dbReference>
<dbReference type="InterPro" id="IPR018369">
    <property type="entry name" value="Chaprnonin_Cpn10_CS"/>
</dbReference>
<dbReference type="InterPro" id="IPR011032">
    <property type="entry name" value="GroES-like_sf"/>
</dbReference>
<dbReference type="NCBIfam" id="NF001531">
    <property type="entry name" value="PRK00364.2-2"/>
    <property type="match status" value="1"/>
</dbReference>
<dbReference type="NCBIfam" id="NF001533">
    <property type="entry name" value="PRK00364.2-4"/>
    <property type="match status" value="1"/>
</dbReference>
<dbReference type="NCBIfam" id="NF001534">
    <property type="entry name" value="PRK00364.2-5"/>
    <property type="match status" value="1"/>
</dbReference>
<dbReference type="PANTHER" id="PTHR10772">
    <property type="entry name" value="10 KDA HEAT SHOCK PROTEIN"/>
    <property type="match status" value="1"/>
</dbReference>
<dbReference type="PANTHER" id="PTHR10772:SF58">
    <property type="entry name" value="CO-CHAPERONIN GROES"/>
    <property type="match status" value="1"/>
</dbReference>
<dbReference type="Pfam" id="PF00166">
    <property type="entry name" value="Cpn10"/>
    <property type="match status" value="1"/>
</dbReference>
<dbReference type="PRINTS" id="PR00297">
    <property type="entry name" value="CHAPERONIN10"/>
</dbReference>
<dbReference type="SMART" id="SM00883">
    <property type="entry name" value="Cpn10"/>
    <property type="match status" value="1"/>
</dbReference>
<dbReference type="SUPFAM" id="SSF50129">
    <property type="entry name" value="GroES-like"/>
    <property type="match status" value="1"/>
</dbReference>
<dbReference type="PROSITE" id="PS00681">
    <property type="entry name" value="CHAPERONINS_CPN10"/>
    <property type="match status" value="1"/>
</dbReference>
<accession>A8YTH7</accession>
<name>CH10_LACH4</name>
<protein>
    <recommendedName>
        <fullName evidence="1">Co-chaperonin GroES</fullName>
    </recommendedName>
    <alternativeName>
        <fullName evidence="1">10 kDa chaperonin</fullName>
    </alternativeName>
    <alternativeName>
        <fullName evidence="1">Chaperonin-10</fullName>
        <shortName evidence="1">Cpn10</shortName>
    </alternativeName>
</protein>
<gene>
    <name evidence="1" type="primary">groES</name>
    <name evidence="1" type="synonym">groS</name>
    <name type="ordered locus">lhv_0425</name>
</gene>
<evidence type="ECO:0000255" key="1">
    <source>
        <dbReference type="HAMAP-Rule" id="MF_00580"/>
    </source>
</evidence>
<sequence length="94" mass="10208">MLQPIGDRVIVKVKDEEEKTVGGIVLASNAKKKPTEGEVVAVGEGAYASNGEKIPMSVKKGDVVLYDRYSGTNVEYEGEKYLVLHEKDILAIAK</sequence>
<reference key="1">
    <citation type="journal article" date="2008" name="J. Bacteriol.">
        <title>Genome sequence of Lactobacillus helveticus: an organism distinguished by selective gene loss and IS element expansion.</title>
        <authorList>
            <person name="Callanan M."/>
            <person name="Kaleta P."/>
            <person name="O'Callaghan J."/>
            <person name="O'Sullivan O."/>
            <person name="Jordan K."/>
            <person name="McAuliffe O."/>
            <person name="Sangrador-Vegas A."/>
            <person name="Slattery L."/>
            <person name="Fitzgerald G.F."/>
            <person name="Beresford T."/>
            <person name="Ross R.P."/>
        </authorList>
    </citation>
    <scope>NUCLEOTIDE SEQUENCE [LARGE SCALE GENOMIC DNA]</scope>
    <source>
        <strain>DPC 4571</strain>
    </source>
</reference>